<gene>
    <name type="ordered locus">MJECL24</name>
</gene>
<evidence type="ECO:0000305" key="1"/>
<comment type="similarity">
    <text evidence="1">Belongs to the ParA family.</text>
</comment>
<sequence length="259" mass="29031">MVVISIANQKGGVGKTTIALNLSFTLAEKGYDTLVIDLDPQFNLSFGILGMKLLDYADKNIGILLSKNSVKKKEIEESIIKINDKLDLIPSHLQLSAVEKMLVNAYAREMKLKNIINQIKENYDYIIIDNAPSLGLFLINSLVASDYIIIPCEPSYFSIAGVQLMLDTVEEIKESNLNPKLKVLGFIFNKYSKQSKIPQKRLEQLKQLYPNIPVIGVIPRTITVEKAEREGKPVFKFDANNPASVAFSELAEWVIENVK</sequence>
<geneLocation type="plasmid">
    <name>large ECE</name>
</geneLocation>
<organism>
    <name type="scientific">Methanocaldococcus jannaschii (strain ATCC 43067 / DSM 2661 / JAL-1 / JCM 10045 / NBRC 100440)</name>
    <name type="common">Methanococcus jannaschii</name>
    <dbReference type="NCBI Taxonomy" id="243232"/>
    <lineage>
        <taxon>Archaea</taxon>
        <taxon>Methanobacteriati</taxon>
        <taxon>Methanobacteriota</taxon>
        <taxon>Methanomada group</taxon>
        <taxon>Methanococci</taxon>
        <taxon>Methanococcales</taxon>
        <taxon>Methanocaldococcaceae</taxon>
        <taxon>Methanocaldococcus</taxon>
    </lineage>
</organism>
<reference key="1">
    <citation type="journal article" date="1996" name="Science">
        <title>Complete genome sequence of the methanogenic archaeon, Methanococcus jannaschii.</title>
        <authorList>
            <person name="Bult C.J."/>
            <person name="White O."/>
            <person name="Olsen G.J."/>
            <person name="Zhou L."/>
            <person name="Fleischmann R.D."/>
            <person name="Sutton G.G."/>
            <person name="Blake J.A."/>
            <person name="FitzGerald L.M."/>
            <person name="Clayton R.A."/>
            <person name="Gocayne J.D."/>
            <person name="Kerlavage A.R."/>
            <person name="Dougherty B.A."/>
            <person name="Tomb J.-F."/>
            <person name="Adams M.D."/>
            <person name="Reich C.I."/>
            <person name="Overbeek R."/>
            <person name="Kirkness E.F."/>
            <person name="Weinstock K.G."/>
            <person name="Merrick J.M."/>
            <person name="Glodek A."/>
            <person name="Scott J.L."/>
            <person name="Geoghagen N.S.M."/>
            <person name="Weidman J.F."/>
            <person name="Fuhrmann J.L."/>
            <person name="Nguyen D."/>
            <person name="Utterback T.R."/>
            <person name="Kelley J.M."/>
            <person name="Peterson J.D."/>
            <person name="Sadow P.W."/>
            <person name="Hanna M.C."/>
            <person name="Cotton M.D."/>
            <person name="Roberts K.M."/>
            <person name="Hurst M.A."/>
            <person name="Kaine B.P."/>
            <person name="Borodovsky M."/>
            <person name="Klenk H.-P."/>
            <person name="Fraser C.M."/>
            <person name="Smith H.O."/>
            <person name="Woese C.R."/>
            <person name="Venter J.C."/>
        </authorList>
    </citation>
    <scope>NUCLEOTIDE SEQUENCE [LARGE SCALE GENOMIC DNA]</scope>
    <source>
        <strain>ATCC 43067 / DSM 2661 / JAL-1 / JCM 10045 / NBRC 100440</strain>
    </source>
</reference>
<dbReference type="EMBL" id="L77118">
    <property type="protein sequence ID" value="AAC37095.1"/>
    <property type="molecule type" value="Genomic_DNA"/>
</dbReference>
<dbReference type="PIR" id="G64512">
    <property type="entry name" value="G64512"/>
</dbReference>
<dbReference type="RefSeq" id="WP_010890071.1">
    <property type="nucleotide sequence ID" value="NC_001732.1"/>
</dbReference>
<dbReference type="SMR" id="Q60283"/>
<dbReference type="PaxDb" id="243232-MJ_ECL24"/>
<dbReference type="EnsemblBacteria" id="AAC37095">
    <property type="protein sequence ID" value="AAC37095"/>
    <property type="gene ID" value="MJ_ECL24"/>
</dbReference>
<dbReference type="GeneID" id="1450808"/>
<dbReference type="KEGG" id="mja:MJ_ECL24"/>
<dbReference type="eggNOG" id="arCOG00586">
    <property type="taxonomic scope" value="Archaea"/>
</dbReference>
<dbReference type="HOGENOM" id="CLU_037612_6_3_2"/>
<dbReference type="InParanoid" id="Q60283"/>
<dbReference type="OrthoDB" id="36110at2157"/>
<dbReference type="PhylomeDB" id="Q60283"/>
<dbReference type="Proteomes" id="UP000000805">
    <property type="component" value="Plasmid pDSM2661_1"/>
</dbReference>
<dbReference type="CDD" id="cd02042">
    <property type="entry name" value="ParAB_family"/>
    <property type="match status" value="1"/>
</dbReference>
<dbReference type="FunFam" id="3.40.50.300:FF:000285">
    <property type="entry name" value="Sporulation initiation inhibitor Soj"/>
    <property type="match status" value="1"/>
</dbReference>
<dbReference type="Gene3D" id="3.40.50.300">
    <property type="entry name" value="P-loop containing nucleotide triphosphate hydrolases"/>
    <property type="match status" value="1"/>
</dbReference>
<dbReference type="InterPro" id="IPR025669">
    <property type="entry name" value="AAA_dom"/>
</dbReference>
<dbReference type="InterPro" id="IPR050678">
    <property type="entry name" value="DNA_Partitioning_ATPase"/>
</dbReference>
<dbReference type="InterPro" id="IPR027417">
    <property type="entry name" value="P-loop_NTPase"/>
</dbReference>
<dbReference type="PANTHER" id="PTHR13696:SF99">
    <property type="entry name" value="COBYRINIC ACID AC-DIAMIDE SYNTHASE"/>
    <property type="match status" value="1"/>
</dbReference>
<dbReference type="PANTHER" id="PTHR13696">
    <property type="entry name" value="P-LOOP CONTAINING NUCLEOSIDE TRIPHOSPHATE HYDROLASE"/>
    <property type="match status" value="1"/>
</dbReference>
<dbReference type="Pfam" id="PF13614">
    <property type="entry name" value="AAA_31"/>
    <property type="match status" value="1"/>
</dbReference>
<dbReference type="PIRSF" id="PIRSF009320">
    <property type="entry name" value="Nuc_binding_HP_1000"/>
    <property type="match status" value="1"/>
</dbReference>
<dbReference type="SUPFAM" id="SSF52540">
    <property type="entry name" value="P-loop containing nucleoside triphosphate hydrolases"/>
    <property type="match status" value="1"/>
</dbReference>
<accession>Q60283</accession>
<name>Y3524_METJA</name>
<feature type="chain" id="PRO_0000201991" description="Uncharacterized protein MJECL24">
    <location>
        <begin position="1"/>
        <end position="259"/>
    </location>
</feature>
<proteinExistence type="inferred from homology"/>
<keyword id="KW-0614">Plasmid</keyword>
<keyword id="KW-1185">Reference proteome</keyword>
<protein>
    <recommendedName>
        <fullName>Uncharacterized protein MJECL24</fullName>
    </recommendedName>
</protein>